<reference key="1">
    <citation type="journal article" date="2006" name="PLoS Biol.">
        <title>Metabolic complementarity and genomics of the dual bacterial symbiosis of sharpshooters.</title>
        <authorList>
            <person name="Wu D."/>
            <person name="Daugherty S.C."/>
            <person name="Van Aken S.E."/>
            <person name="Pai G.H."/>
            <person name="Watkins K.L."/>
            <person name="Khouri H."/>
            <person name="Tallon L.J."/>
            <person name="Zaborsky J.M."/>
            <person name="Dunbar H.E."/>
            <person name="Tran P.L."/>
            <person name="Moran N.A."/>
            <person name="Eisen J.A."/>
        </authorList>
    </citation>
    <scope>NUCLEOTIDE SEQUENCE [LARGE SCALE GENOMIC DNA]</scope>
</reference>
<organism>
    <name type="scientific">Baumannia cicadellinicola subsp. Homalodisca coagulata</name>
    <dbReference type="NCBI Taxonomy" id="374463"/>
    <lineage>
        <taxon>Bacteria</taxon>
        <taxon>Pseudomonadati</taxon>
        <taxon>Pseudomonadota</taxon>
        <taxon>Gammaproteobacteria</taxon>
        <taxon>Candidatus Palibaumannia</taxon>
    </lineage>
</organism>
<keyword id="KW-0963">Cytoplasm</keyword>
<keyword id="KW-0251">Elongation factor</keyword>
<keyword id="KW-0648">Protein biosynthesis</keyword>
<keyword id="KW-1185">Reference proteome</keyword>
<gene>
    <name evidence="1" type="primary">tsf</name>
    <name type="ordered locus">BCI_0528</name>
</gene>
<accession>Q1LSV6</accession>
<comment type="function">
    <text evidence="1">Associates with the EF-Tu.GDP complex and induces the exchange of GDP to GTP. It remains bound to the aminoacyl-tRNA.EF-Tu.GTP complex up to the GTP hydrolysis stage on the ribosome.</text>
</comment>
<comment type="subcellular location">
    <subcellularLocation>
        <location evidence="1">Cytoplasm</location>
    </subcellularLocation>
</comment>
<comment type="similarity">
    <text evidence="1">Belongs to the EF-Ts family.</text>
</comment>
<dbReference type="EMBL" id="CP000238">
    <property type="protein sequence ID" value="ABF14348.1"/>
    <property type="molecule type" value="Genomic_DNA"/>
</dbReference>
<dbReference type="RefSeq" id="WP_011520691.1">
    <property type="nucleotide sequence ID" value="NC_007984.1"/>
</dbReference>
<dbReference type="SMR" id="Q1LSV6"/>
<dbReference type="STRING" id="374463.BCI_0528"/>
<dbReference type="KEGG" id="bci:BCI_0528"/>
<dbReference type="HOGENOM" id="CLU_047155_0_2_6"/>
<dbReference type="OrthoDB" id="9808348at2"/>
<dbReference type="Proteomes" id="UP000002427">
    <property type="component" value="Chromosome"/>
</dbReference>
<dbReference type="GO" id="GO:0005737">
    <property type="term" value="C:cytoplasm"/>
    <property type="evidence" value="ECO:0007669"/>
    <property type="project" value="UniProtKB-SubCell"/>
</dbReference>
<dbReference type="GO" id="GO:0003746">
    <property type="term" value="F:translation elongation factor activity"/>
    <property type="evidence" value="ECO:0007669"/>
    <property type="project" value="UniProtKB-UniRule"/>
</dbReference>
<dbReference type="CDD" id="cd14275">
    <property type="entry name" value="UBA_EF-Ts"/>
    <property type="match status" value="1"/>
</dbReference>
<dbReference type="FunFam" id="1.10.8.10:FF:000001">
    <property type="entry name" value="Elongation factor Ts"/>
    <property type="match status" value="1"/>
</dbReference>
<dbReference type="FunFam" id="3.30.479.20:FF:000001">
    <property type="entry name" value="Elongation factor Ts"/>
    <property type="match status" value="1"/>
</dbReference>
<dbReference type="Gene3D" id="1.10.286.20">
    <property type="match status" value="1"/>
</dbReference>
<dbReference type="Gene3D" id="1.10.8.10">
    <property type="entry name" value="DNA helicase RuvA subunit, C-terminal domain"/>
    <property type="match status" value="1"/>
</dbReference>
<dbReference type="Gene3D" id="3.30.479.20">
    <property type="entry name" value="Elongation factor Ts, dimerisation domain"/>
    <property type="match status" value="2"/>
</dbReference>
<dbReference type="HAMAP" id="MF_00050">
    <property type="entry name" value="EF_Ts"/>
    <property type="match status" value="1"/>
</dbReference>
<dbReference type="InterPro" id="IPR036402">
    <property type="entry name" value="EF-Ts_dimer_sf"/>
</dbReference>
<dbReference type="InterPro" id="IPR001816">
    <property type="entry name" value="Transl_elong_EFTs/EF1B"/>
</dbReference>
<dbReference type="InterPro" id="IPR014039">
    <property type="entry name" value="Transl_elong_EFTs/EF1B_dimer"/>
</dbReference>
<dbReference type="InterPro" id="IPR018101">
    <property type="entry name" value="Transl_elong_Ts_CS"/>
</dbReference>
<dbReference type="InterPro" id="IPR009060">
    <property type="entry name" value="UBA-like_sf"/>
</dbReference>
<dbReference type="NCBIfam" id="TIGR00116">
    <property type="entry name" value="tsf"/>
    <property type="match status" value="1"/>
</dbReference>
<dbReference type="PANTHER" id="PTHR11741">
    <property type="entry name" value="ELONGATION FACTOR TS"/>
    <property type="match status" value="1"/>
</dbReference>
<dbReference type="PANTHER" id="PTHR11741:SF0">
    <property type="entry name" value="ELONGATION FACTOR TS, MITOCHONDRIAL"/>
    <property type="match status" value="1"/>
</dbReference>
<dbReference type="Pfam" id="PF00889">
    <property type="entry name" value="EF_TS"/>
    <property type="match status" value="1"/>
</dbReference>
<dbReference type="SUPFAM" id="SSF54713">
    <property type="entry name" value="Elongation factor Ts (EF-Ts), dimerisation domain"/>
    <property type="match status" value="1"/>
</dbReference>
<dbReference type="SUPFAM" id="SSF46934">
    <property type="entry name" value="UBA-like"/>
    <property type="match status" value="1"/>
</dbReference>
<dbReference type="PROSITE" id="PS01126">
    <property type="entry name" value="EF_TS_1"/>
    <property type="match status" value="1"/>
</dbReference>
<dbReference type="PROSITE" id="PS01127">
    <property type="entry name" value="EF_TS_2"/>
    <property type="match status" value="1"/>
</dbReference>
<protein>
    <recommendedName>
        <fullName evidence="1">Elongation factor Ts</fullName>
        <shortName evidence="1">EF-Ts</shortName>
    </recommendedName>
</protein>
<sequence>MVAITTTLVKQLRDRTNAGLMKCKKALIEANGDIELAIDNLRKSGQITAANKSSRITAQGIILTKINHNSQYGVIIELNCETDFVAKDKIFKNFGEDIITTALNQKISSLEEIKSLFEEKRITLVDTVGENINIRRINTLEGNLIVSYLHDTRIGVLLSANNISQNLYLGKQIAMHIAAMKPKYIQVNDIPSYIISREHKIQLNIAMQSNKPQKVIQQIVEGRMREFTRDISLLDQNFIIDPSQKVGQILEHYNIIVKNFIRFEVGEWIEQEEHYKANES</sequence>
<feature type="chain" id="PRO_0000323443" description="Elongation factor Ts">
    <location>
        <begin position="1"/>
        <end position="280"/>
    </location>
</feature>
<feature type="region of interest" description="Involved in Mg(2+) ion dislocation from EF-Tu" evidence="1">
    <location>
        <begin position="82"/>
        <end position="85"/>
    </location>
</feature>
<proteinExistence type="inferred from homology"/>
<evidence type="ECO:0000255" key="1">
    <source>
        <dbReference type="HAMAP-Rule" id="MF_00050"/>
    </source>
</evidence>
<name>EFTS_BAUCH</name>